<accession>A6U850</accession>
<evidence type="ECO:0000255" key="1">
    <source>
        <dbReference type="HAMAP-Rule" id="MF_00368"/>
    </source>
</evidence>
<evidence type="ECO:0000305" key="2"/>
<name>RL7_SINMW</name>
<reference key="1">
    <citation type="submission" date="2007-06" db="EMBL/GenBank/DDBJ databases">
        <title>Complete sequence of Sinorhizobium medicae WSM419 chromosome.</title>
        <authorList>
            <consortium name="US DOE Joint Genome Institute"/>
            <person name="Copeland A."/>
            <person name="Lucas S."/>
            <person name="Lapidus A."/>
            <person name="Barry K."/>
            <person name="Glavina del Rio T."/>
            <person name="Dalin E."/>
            <person name="Tice H."/>
            <person name="Pitluck S."/>
            <person name="Chain P."/>
            <person name="Malfatti S."/>
            <person name="Shin M."/>
            <person name="Vergez L."/>
            <person name="Schmutz J."/>
            <person name="Larimer F."/>
            <person name="Land M."/>
            <person name="Hauser L."/>
            <person name="Kyrpides N."/>
            <person name="Mikhailova N."/>
            <person name="Reeve W.G."/>
            <person name="Richardson P."/>
        </authorList>
    </citation>
    <scope>NUCLEOTIDE SEQUENCE [LARGE SCALE GENOMIC DNA]</scope>
    <source>
        <strain>WSM419</strain>
    </source>
</reference>
<keyword id="KW-0687">Ribonucleoprotein</keyword>
<keyword id="KW-0689">Ribosomal protein</keyword>
<feature type="chain" id="PRO_1000007092" description="Large ribosomal subunit protein bL12">
    <location>
        <begin position="1"/>
        <end position="125"/>
    </location>
</feature>
<comment type="function">
    <text evidence="1">Forms part of the ribosomal stalk which helps the ribosome interact with GTP-bound translation factors. Is thus essential for accurate translation.</text>
</comment>
<comment type="subunit">
    <text evidence="1">Homodimer. Part of the ribosomal stalk of the 50S ribosomal subunit. Forms a multimeric L10(L12)X complex, where L10 forms an elongated spine to which 2 to 4 L12 dimers bind in a sequential fashion. Binds GTP-bound translation factors.</text>
</comment>
<comment type="similarity">
    <text evidence="1">Belongs to the bacterial ribosomal protein bL12 family.</text>
</comment>
<sequence>MADLAKIVEDLSSLTVLEAAELSKLLEEKWGVSAAAPVAVAAAGGAAAAAPVEEEKTEFDVILTEAGANKINVIKEVRAITGLGLKEAKDLVEGAPKAVKEAVSKAEAADLKKKLEDAGAKVDVK</sequence>
<dbReference type="EMBL" id="CP000738">
    <property type="protein sequence ID" value="ABR59830.1"/>
    <property type="molecule type" value="Genomic_DNA"/>
</dbReference>
<dbReference type="RefSeq" id="WP_011975165.1">
    <property type="nucleotide sequence ID" value="NC_009636.1"/>
</dbReference>
<dbReference type="RefSeq" id="YP_001326665.1">
    <property type="nucleotide sequence ID" value="NC_009636.1"/>
</dbReference>
<dbReference type="SMR" id="A6U850"/>
<dbReference type="STRING" id="366394.Smed_0977"/>
<dbReference type="GeneID" id="61614979"/>
<dbReference type="KEGG" id="smd:Smed_0977"/>
<dbReference type="PATRIC" id="fig|366394.8.peg.4096"/>
<dbReference type="eggNOG" id="COG0222">
    <property type="taxonomic scope" value="Bacteria"/>
</dbReference>
<dbReference type="HOGENOM" id="CLU_086499_3_0_5"/>
<dbReference type="OrthoDB" id="9811748at2"/>
<dbReference type="Proteomes" id="UP000001108">
    <property type="component" value="Chromosome"/>
</dbReference>
<dbReference type="GO" id="GO:0022625">
    <property type="term" value="C:cytosolic large ribosomal subunit"/>
    <property type="evidence" value="ECO:0007669"/>
    <property type="project" value="TreeGrafter"/>
</dbReference>
<dbReference type="GO" id="GO:0003729">
    <property type="term" value="F:mRNA binding"/>
    <property type="evidence" value="ECO:0007669"/>
    <property type="project" value="TreeGrafter"/>
</dbReference>
<dbReference type="GO" id="GO:0003735">
    <property type="term" value="F:structural constituent of ribosome"/>
    <property type="evidence" value="ECO:0007669"/>
    <property type="project" value="InterPro"/>
</dbReference>
<dbReference type="GO" id="GO:0006412">
    <property type="term" value="P:translation"/>
    <property type="evidence" value="ECO:0007669"/>
    <property type="project" value="UniProtKB-UniRule"/>
</dbReference>
<dbReference type="CDD" id="cd00387">
    <property type="entry name" value="Ribosomal_L7_L12"/>
    <property type="match status" value="1"/>
</dbReference>
<dbReference type="FunFam" id="1.20.5.710:FF:000007">
    <property type="entry name" value="50S ribosomal protein L7/L12"/>
    <property type="match status" value="1"/>
</dbReference>
<dbReference type="FunFam" id="3.30.1390.10:FF:000001">
    <property type="entry name" value="50S ribosomal protein L7/L12"/>
    <property type="match status" value="1"/>
</dbReference>
<dbReference type="Gene3D" id="3.30.1390.10">
    <property type="match status" value="1"/>
</dbReference>
<dbReference type="Gene3D" id="1.20.5.710">
    <property type="entry name" value="Single helix bin"/>
    <property type="match status" value="1"/>
</dbReference>
<dbReference type="HAMAP" id="MF_00368">
    <property type="entry name" value="Ribosomal_bL12"/>
    <property type="match status" value="1"/>
</dbReference>
<dbReference type="InterPro" id="IPR000206">
    <property type="entry name" value="Ribosomal_bL12"/>
</dbReference>
<dbReference type="InterPro" id="IPR013823">
    <property type="entry name" value="Ribosomal_bL12_C"/>
</dbReference>
<dbReference type="InterPro" id="IPR014719">
    <property type="entry name" value="Ribosomal_bL12_C/ClpS-like"/>
</dbReference>
<dbReference type="InterPro" id="IPR008932">
    <property type="entry name" value="Ribosomal_bL12_oligo"/>
</dbReference>
<dbReference type="InterPro" id="IPR036235">
    <property type="entry name" value="Ribosomal_bL12_oligo_N_sf"/>
</dbReference>
<dbReference type="NCBIfam" id="TIGR00855">
    <property type="entry name" value="L12"/>
    <property type="match status" value="1"/>
</dbReference>
<dbReference type="PANTHER" id="PTHR45987">
    <property type="entry name" value="39S RIBOSOMAL PROTEIN L12"/>
    <property type="match status" value="1"/>
</dbReference>
<dbReference type="PANTHER" id="PTHR45987:SF4">
    <property type="entry name" value="LARGE RIBOSOMAL SUBUNIT PROTEIN BL12M"/>
    <property type="match status" value="1"/>
</dbReference>
<dbReference type="Pfam" id="PF00542">
    <property type="entry name" value="Ribosomal_L12"/>
    <property type="match status" value="1"/>
</dbReference>
<dbReference type="Pfam" id="PF16320">
    <property type="entry name" value="Ribosomal_L12_N"/>
    <property type="match status" value="1"/>
</dbReference>
<dbReference type="SUPFAM" id="SSF54736">
    <property type="entry name" value="ClpS-like"/>
    <property type="match status" value="1"/>
</dbReference>
<dbReference type="SUPFAM" id="SSF48300">
    <property type="entry name" value="Ribosomal protein L7/12, oligomerisation (N-terminal) domain"/>
    <property type="match status" value="1"/>
</dbReference>
<gene>
    <name evidence="1" type="primary">rplL</name>
    <name type="ordered locus">Smed_0977</name>
</gene>
<protein>
    <recommendedName>
        <fullName evidence="1">Large ribosomal subunit protein bL12</fullName>
    </recommendedName>
    <alternativeName>
        <fullName evidence="2">50S ribosomal protein L7/L12</fullName>
    </alternativeName>
</protein>
<organism>
    <name type="scientific">Sinorhizobium medicae (strain WSM419)</name>
    <name type="common">Ensifer medicae</name>
    <dbReference type="NCBI Taxonomy" id="366394"/>
    <lineage>
        <taxon>Bacteria</taxon>
        <taxon>Pseudomonadati</taxon>
        <taxon>Pseudomonadota</taxon>
        <taxon>Alphaproteobacteria</taxon>
        <taxon>Hyphomicrobiales</taxon>
        <taxon>Rhizobiaceae</taxon>
        <taxon>Sinorhizobium/Ensifer group</taxon>
        <taxon>Sinorhizobium</taxon>
    </lineage>
</organism>
<proteinExistence type="inferred from homology"/>